<proteinExistence type="inferred from homology"/>
<gene>
    <name type="primary">apaG</name>
    <name type="ordered locus">c0063</name>
</gene>
<protein>
    <recommendedName>
        <fullName>Protein ApaG</fullName>
    </recommendedName>
</protein>
<dbReference type="EMBL" id="AE014075">
    <property type="protein sequence ID" value="AAN78559.1"/>
    <property type="molecule type" value="Genomic_DNA"/>
</dbReference>
<dbReference type="RefSeq" id="WP_000610901.1">
    <property type="nucleotide sequence ID" value="NZ_CP051263.1"/>
</dbReference>
<dbReference type="SMR" id="P62673"/>
<dbReference type="STRING" id="199310.c0063"/>
<dbReference type="GeneID" id="93777385"/>
<dbReference type="KEGG" id="ecc:c0063"/>
<dbReference type="eggNOG" id="COG2967">
    <property type="taxonomic scope" value="Bacteria"/>
</dbReference>
<dbReference type="HOGENOM" id="CLU_128074_0_0_6"/>
<dbReference type="BioCyc" id="ECOL199310:C0063-MONOMER"/>
<dbReference type="Proteomes" id="UP000001410">
    <property type="component" value="Chromosome"/>
</dbReference>
<dbReference type="GO" id="GO:0070987">
    <property type="term" value="P:error-free translesion synthesis"/>
    <property type="evidence" value="ECO:0007669"/>
    <property type="project" value="TreeGrafter"/>
</dbReference>
<dbReference type="Gene3D" id="2.60.40.1470">
    <property type="entry name" value="ApaG domain"/>
    <property type="match status" value="1"/>
</dbReference>
<dbReference type="HAMAP" id="MF_00791">
    <property type="entry name" value="ApaG"/>
    <property type="match status" value="1"/>
</dbReference>
<dbReference type="InterPro" id="IPR007474">
    <property type="entry name" value="ApaG_domain"/>
</dbReference>
<dbReference type="InterPro" id="IPR036767">
    <property type="entry name" value="ApaG_sf"/>
</dbReference>
<dbReference type="InterPro" id="IPR023065">
    <property type="entry name" value="Uncharacterised_ApaG"/>
</dbReference>
<dbReference type="NCBIfam" id="NF003967">
    <property type="entry name" value="PRK05461.1"/>
    <property type="match status" value="1"/>
</dbReference>
<dbReference type="PANTHER" id="PTHR14289">
    <property type="entry name" value="F-BOX ONLY PROTEIN 3"/>
    <property type="match status" value="1"/>
</dbReference>
<dbReference type="PANTHER" id="PTHR14289:SF16">
    <property type="entry name" value="POLYMERASE DELTA-INTERACTING PROTEIN 2"/>
    <property type="match status" value="1"/>
</dbReference>
<dbReference type="Pfam" id="PF04379">
    <property type="entry name" value="DUF525"/>
    <property type="match status" value="1"/>
</dbReference>
<dbReference type="SUPFAM" id="SSF110069">
    <property type="entry name" value="ApaG-like"/>
    <property type="match status" value="1"/>
</dbReference>
<dbReference type="PROSITE" id="PS51087">
    <property type="entry name" value="APAG"/>
    <property type="match status" value="1"/>
</dbReference>
<accession>P62673</accession>
<accession>P05636</accession>
<name>APAG_ECOL6</name>
<feature type="chain" id="PRO_0000197949" description="Protein ApaG">
    <location>
        <begin position="1"/>
        <end position="125"/>
    </location>
</feature>
<feature type="domain" description="ApaG">
    <location>
        <begin position="1"/>
        <end position="125"/>
    </location>
</feature>
<reference key="1">
    <citation type="journal article" date="2002" name="Proc. Natl. Acad. Sci. U.S.A.">
        <title>Extensive mosaic structure revealed by the complete genome sequence of uropathogenic Escherichia coli.</title>
        <authorList>
            <person name="Welch R.A."/>
            <person name="Burland V."/>
            <person name="Plunkett G. III"/>
            <person name="Redford P."/>
            <person name="Roesch P."/>
            <person name="Rasko D."/>
            <person name="Buckles E.L."/>
            <person name="Liou S.-R."/>
            <person name="Boutin A."/>
            <person name="Hackett J."/>
            <person name="Stroud D."/>
            <person name="Mayhew G.F."/>
            <person name="Rose D.J."/>
            <person name="Zhou S."/>
            <person name="Schwartz D.C."/>
            <person name="Perna N.T."/>
            <person name="Mobley H.L.T."/>
            <person name="Donnenberg M.S."/>
            <person name="Blattner F.R."/>
        </authorList>
    </citation>
    <scope>NUCLEOTIDE SEQUENCE [LARGE SCALE GENOMIC DNA]</scope>
    <source>
        <strain>CFT073 / ATCC 700928 / UPEC</strain>
    </source>
</reference>
<keyword id="KW-1185">Reference proteome</keyword>
<organism>
    <name type="scientific">Escherichia coli O6:H1 (strain CFT073 / ATCC 700928 / UPEC)</name>
    <dbReference type="NCBI Taxonomy" id="199310"/>
    <lineage>
        <taxon>Bacteria</taxon>
        <taxon>Pseudomonadati</taxon>
        <taxon>Pseudomonadota</taxon>
        <taxon>Gammaproteobacteria</taxon>
        <taxon>Enterobacterales</taxon>
        <taxon>Enterobacteriaceae</taxon>
        <taxon>Escherichia</taxon>
    </lineage>
</organism>
<sequence>MINSPRVCIQVQSVYIEAQSSPDNERYVFAYTVTIRNLGRAPVQLLGRYWLITNGNGRETEVQGEGVVGVQPLIAPGEEYQYTSGAIIETPLGTMQGHYEMIDENGVPFSIDIPVFRLAVPTLIH</sequence>